<feature type="chain" id="PRO_0000368153" description="Outer capsid protein VP4" evidence="1">
    <location>
        <begin position="1"/>
        <end position="776"/>
    </location>
</feature>
<feature type="chain" id="PRO_0000368154" description="Outer capsid protein VP8*" evidence="1">
    <location>
        <begin position="1"/>
        <end position="231"/>
    </location>
</feature>
<feature type="chain" id="PRO_0000368155" description="Outer capsid protein VP5*" evidence="1">
    <location>
        <begin position="248"/>
        <end position="776"/>
    </location>
</feature>
<feature type="region of interest" description="Spike head" evidence="1">
    <location>
        <begin position="65"/>
        <end position="224"/>
    </location>
</feature>
<feature type="region of interest" description="Spike body and stalk (antigen domain)" evidence="1">
    <location>
        <begin position="248"/>
        <end position="479"/>
    </location>
</feature>
<feature type="region of interest" description="Hydrophobic; possible role in virus entry into host cell" evidence="1">
    <location>
        <begin position="389"/>
        <end position="409"/>
    </location>
</feature>
<feature type="region of interest" description="Spike foot" evidence="1">
    <location>
        <begin position="510"/>
        <end position="776"/>
    </location>
</feature>
<feature type="coiled-coil region" evidence="1">
    <location>
        <begin position="484"/>
        <end position="511"/>
    </location>
</feature>
<feature type="short sequence motif" description="DGE motif; interaction with ITGA2/ITGB1 heterodimer" evidence="1">
    <location>
        <begin position="308"/>
        <end position="310"/>
    </location>
</feature>
<feature type="short sequence motif" description="YGL motif; interaction with ITGA4" evidence="1">
    <location>
        <begin position="448"/>
        <end position="450"/>
    </location>
</feature>
<feature type="site" description="Cleavage" evidence="1">
    <location>
        <begin position="231"/>
        <end position="232"/>
    </location>
</feature>
<feature type="site" description="Cleavage" evidence="1">
    <location>
        <begin position="241"/>
        <end position="242"/>
    </location>
</feature>
<feature type="site" description="Cleavage; associated with enhancement of infectivity" evidence="1">
    <location>
        <begin position="247"/>
        <end position="248"/>
    </location>
</feature>
<feature type="disulfide bond" evidence="1">
    <location>
        <begin position="318"/>
        <end position="380"/>
    </location>
</feature>
<keyword id="KW-0167">Capsid protein</keyword>
<keyword id="KW-0175">Coiled coil</keyword>
<keyword id="KW-1015">Disulfide bond</keyword>
<keyword id="KW-0348">Hemagglutinin</keyword>
<keyword id="KW-1032">Host cell membrane</keyword>
<keyword id="KW-1035">Host cytoplasm</keyword>
<keyword id="KW-1037">Host cytoskeleton</keyword>
<keyword id="KW-1038">Host endoplasmic reticulum</keyword>
<keyword id="KW-1043">Host membrane</keyword>
<keyword id="KW-0945">Host-virus interaction</keyword>
<keyword id="KW-0472">Membrane</keyword>
<keyword id="KW-1152">Outer capsid protein</keyword>
<keyword id="KW-1161">Viral attachment to host cell</keyword>
<keyword id="KW-1162">Viral penetration into host cytoplasm</keyword>
<keyword id="KW-1173">Viral penetration via permeabilization of host membrane</keyword>
<keyword id="KW-0946">Virion</keyword>
<keyword id="KW-1160">Virus entry into host cell</keyword>
<accession>Q98167</accession>
<organism>
    <name type="scientific">Rotavirus A (strain RVA/Rabbit/United States/ALA/XXXX/G3P11[14])</name>
    <name type="common">RV-A</name>
    <name type="synonym">Rotavirus A (strain Alabama)</name>
    <dbReference type="NCBI Taxonomy" id="101359"/>
    <lineage>
        <taxon>Viruses</taxon>
        <taxon>Riboviria</taxon>
        <taxon>Orthornavirae</taxon>
        <taxon>Duplornaviricota</taxon>
        <taxon>Resentoviricetes</taxon>
        <taxon>Reovirales</taxon>
        <taxon>Sedoreoviridae</taxon>
        <taxon>Rotavirus</taxon>
        <taxon>Rotavirus A</taxon>
    </lineage>
</organism>
<comment type="function">
    <molecule>Outer capsid protein VP4</molecule>
    <text evidence="1">Spike-forming protein that mediates virion attachment to the host epithelial cell receptors and plays a major role in cell penetration, determination of host range restriction and virulence. Rotavirus attachment and entry into the host cell probably involves multiple sequential contacts between the outer capsid proteins VP4 and VP7, and the cell receptors. It is subsequently lost, together with VP7, following virus entry into the host cell. Following entry into the host cell, low intracellular or intravesicular Ca(2+) concentration probably causes the calcium-stabilized VP7 trimers to dissociate from the virion. This step is probably necessary for the membrane-disrupting entry step and the release of VP4, which is locked onto the virion by VP7. During the virus exit from the host cell, VP4 seems to be required to target the newly formed virions to the host cell lipid rafts.</text>
</comment>
<comment type="function">
    <molecule>Outer capsid protein VP5*</molecule>
    <text evidence="1">Forms the spike 'foot' and 'body' and acts as a membrane permeabilization protein that mediates release of viral particles from endosomal compartments into the cytoplasm. During entry, the part of VP5* that protrudes from the virus folds back on itself and reorganizes from a local dimer to a trimer. This reorganization may be linked to membrane penetration by exposing VP5* hydrophobic region. In integrin-dependent strains, VP5* targets the integrin heterodimer ITGA2/ITGB1 for cell attachment.</text>
</comment>
<comment type="function">
    <molecule>Outer capsid protein VP8*</molecule>
    <text evidence="1">Forms the head of the spikes and mediates the recognition of specific host cell surface glycans. It is the viral hemagglutinin and an important target of neutralizing antibodies. In sialic acid-dependent strains, VP8* binds to host cell sialic acid, most probably a ganglioside, providing the initial contact. In some other strains, VP8* mediates the attachment to histo-blood group antigens (HBGAs) for viral entry.</text>
</comment>
<comment type="subunit">
    <molecule>Outer capsid protein VP4</molecule>
    <text evidence="1">Homotrimer. VP4 adopts a dimeric appearance above the capsid surface, while forming a trimeric base anchored inside the capsid layer. Only hints of the third molecule are observed above the capsid surface. It probably performs a series of molecular rearrangements during viral entry. Prior to trypsin cleavage, it is flexible. The priming trypsin cleavage triggers its rearrangement into rigid spikes with approximate two-fold symmetry of their protruding parts. After an unknown second triggering event, cleaved VP4 may undergo another rearrangement, in which two VP5* subunits fold back on themselves and join a third subunit to form a tightly associated trimer, shaped like a folded umbrella. Interacts with VP6. Interacts with VP7.</text>
</comment>
<comment type="subunit">
    <molecule>Outer capsid protein VP5*</molecule>
    <text evidence="1">Homotrimer. The trimer is coiled-coil stabilized by its C-terminus, however, its N-terminus, known as antigen domain or 'body', seems to be flexible allowing it to self-associate either as a dimer or a trimer.</text>
</comment>
<comment type="subcellular location">
    <molecule>Outer capsid protein VP4</molecule>
    <subcellularLocation>
        <location evidence="1">Virion</location>
    </subcellularLocation>
    <subcellularLocation>
        <location evidence="1">Host rough endoplasmic reticulum</location>
    </subcellularLocation>
    <subcellularLocation>
        <location evidence="1">Host cell membrane</location>
    </subcellularLocation>
    <subcellularLocation>
        <location evidence="1">Host cytoplasm</location>
        <location evidence="1">Host cytoskeleton</location>
    </subcellularLocation>
    <subcellularLocation>
        <location evidence="1">Host endoplasmic reticulum-Golgi intermediate compartment</location>
    </subcellularLocation>
    <text evidence="1">The outer layer contains 180 copies of VP4, grouped as 60 dimers. Immature double-layered particles assembled in the cytoplasm bud across the membrane of the endoplasmic reticulum, acquiring during this process a transient lipid membrane that is modified with the ER resident viral glycoproteins NSP4 and VP7; these enveloped particles also contain VP4. As the particles move towards the interior of the ER cisternae, the transient lipid membrane and the non-structural protein NSP4 are lost, while the virus surface proteins VP4 and VP7 rearrange to form the outermost virus protein layer, yielding mature infectious triple-layered particles. VP4 also seems to associate with lipid rafts of the host cell membrane probably for the exit of the virus from the infected cell by an alternate pathway.</text>
</comment>
<comment type="subcellular location">
    <molecule>Outer capsid protein VP8*</molecule>
    <subcellularLocation>
        <location evidence="1">Virion</location>
    </subcellularLocation>
    <text evidence="1">Outer capsid protein.</text>
</comment>
<comment type="subcellular location">
    <molecule>Outer capsid protein VP5*</molecule>
    <subcellularLocation>
        <location evidence="1">Virion</location>
    </subcellularLocation>
    <text evidence="1">Outer capsid protein.</text>
</comment>
<comment type="domain">
    <molecule>Outer capsid protein VP4</molecule>
    <text evidence="1">The VP4 spike is divided into a foot, a stalk and body, and a head.</text>
</comment>
<comment type="PTM">
    <molecule>Outer capsid protein VP4</molecule>
    <text evidence="1">Proteolytic cleavage by trypsin results in activation of VP4 functions and greatly increases infectivity. The penetration into the host cell is dependent on trypsin treatment of VP4. It produces two peptides, VP5* and VP8* that remain associated with the virion. Cleavage of VP4 by trypsin probably occurs in vivo in the lumen of the intestine prior to infection of enterocytes. Trypsin seems to be incorporated into the three-layered viral particles but remains inactive as long as the viral outer capsid is intact and would only be activated upon the solubilization of the latter.</text>
</comment>
<comment type="miscellaneous">
    <text evidence="2 3">This strain probably does not use sialic acid to attach to the host cell.</text>
</comment>
<comment type="miscellaneous">
    <text evidence="1">In group A rotaviruses, VP4 defines the P serotype.</text>
</comment>
<comment type="miscellaneous">
    <text evidence="1">Some rotavirus strains are neuraminidase-sensitive and require sialic acid to attach to the cell surface. Some rotavirus strains are integrin-dependent. Some rotavirus strains depend on ganglioside for their entry into the host cell. Hsp70 also seems to be involved in the entry of some strains.</text>
</comment>
<comment type="similarity">
    <text evidence="1">Belongs to the rotavirus VP4 family.</text>
</comment>
<reference key="1">
    <citation type="journal article" date="1997" name="Arch. Virol.">
        <title>Comparative amino acid sequence analysis of the outer capsid protein VP4 from four lapine rotavirus strains reveals identity with genotype P[14] human rotaviruses.</title>
        <authorList>
            <person name="Ciarlet M."/>
            <person name="Estes M.K."/>
            <person name="Conner M.E."/>
        </authorList>
    </citation>
    <scope>NUCLEOTIDE SEQUENCE [MRNA]</scope>
</reference>
<reference key="2">
    <citation type="journal article" date="2002" name="J. Virol.">
        <title>Initial interaction of rotavirus strains with N-acetylneuraminic (sialic) acid residues on the cell surface correlates with VP4 genotype, not species of origin.</title>
        <authorList>
            <person name="Ciarlet M."/>
            <person name="Ludert J.E."/>
            <person name="Iturriza-Gomara M."/>
            <person name="Liprandi F."/>
            <person name="Gray J.J."/>
            <person name="Desselberger U."/>
            <person name="Estes M.K."/>
        </authorList>
    </citation>
    <scope>SIALIC ACID INDEPENDENCY</scope>
</reference>
<reference key="3">
    <citation type="journal article" date="2006" name="Glycoconj. J.">
        <title>Role of sialic acids in rotavirus infection.</title>
        <authorList>
            <person name="Isa P."/>
            <person name="Arias C.F."/>
            <person name="Lopez S."/>
        </authorList>
    </citation>
    <scope>REVIEW</scope>
</reference>
<name>VP4_ROTRA</name>
<sequence>MASLIYRQLLSNSYVTNISDEVSEIGARKTTNVTVNSGPFAQTGYAPVNWGHGELSDSTLVQPTLDGPYQPTTFNLPINYWMLIAPTQAGRVAEGTNTTNRWFACVLVEPSVQSTRREYVLDGQTVQLQVSNDSSTLWKFILFIKLEKNGTYSQYSTLSTSNKLCAWMKREGRVYWYTGTTPNASESYYLTINNDNSHVSCDAEFYLLPRSQTDLCDQYINNGLPPVQNTRNVVPVSITSREIRYTKAQMNEDIVVSKTSLWKEMQYNRDIIIRFKFANSIVKSGGLGYKLSEISFKPMNYQYTYTRDGEEINSHTTCSVNGVNDFSYNGGTLPTDFSISRFEVIKENSKVYIDYWDDSQAFRNMVYVRSLSANLNDAVCSGGDYTFALPVGAWPVMSGGAVTLSSEGVTLSTQFTDYLSLNSLRFRFRLTVSEPSFSISRTRLSGIYGLPAANPNNNVEYYEIAGRFSLISLVLTNDDYQTPIANSVTVRQDLERQLGELREEFNALSQEIALSQLIDLATLPLDMFSMFSGIKSTVETVKSMTTNIMKKFKTSNLANAISDLTNSMSDAASSVSRSVSVRSIGGNATSRISTAIQAGDDLRTVADASTQISSVSRSLRLREFTTQADNLSFDDISAAVLKTKLDKSTQISQSTIPDIISESSEKFIPMRTYRVIDNDTAFETGIDGHFYAYRVDTFDEVPFDVERFNKLITDSPVLSAIIDFKTLKNLNDNYGITKTQAMELLQSNPKTLKEFINNNNPIIRNRIENLIAQCRL</sequence>
<dbReference type="EMBL" id="U62149">
    <property type="protein sequence ID" value="AAB65812.1"/>
    <property type="molecule type" value="mRNA"/>
</dbReference>
<dbReference type="SMR" id="Q98167"/>
<dbReference type="GO" id="GO:0044172">
    <property type="term" value="C:host cell endoplasmic reticulum-Golgi intermediate compartment"/>
    <property type="evidence" value="ECO:0007669"/>
    <property type="project" value="UniProtKB-SubCell"/>
</dbReference>
<dbReference type="GO" id="GO:0020002">
    <property type="term" value="C:host cell plasma membrane"/>
    <property type="evidence" value="ECO:0007669"/>
    <property type="project" value="UniProtKB-SubCell"/>
</dbReference>
<dbReference type="GO" id="GO:0044168">
    <property type="term" value="C:host cell rough endoplasmic reticulum"/>
    <property type="evidence" value="ECO:0007669"/>
    <property type="project" value="UniProtKB-SubCell"/>
</dbReference>
<dbReference type="GO" id="GO:0044163">
    <property type="term" value="C:host cytoskeleton"/>
    <property type="evidence" value="ECO:0007669"/>
    <property type="project" value="UniProtKB-SubCell"/>
</dbReference>
<dbReference type="GO" id="GO:0016020">
    <property type="term" value="C:membrane"/>
    <property type="evidence" value="ECO:0007669"/>
    <property type="project" value="UniProtKB-KW"/>
</dbReference>
<dbReference type="GO" id="GO:0039624">
    <property type="term" value="C:viral outer capsid"/>
    <property type="evidence" value="ECO:0007669"/>
    <property type="project" value="UniProtKB-UniRule"/>
</dbReference>
<dbReference type="GO" id="GO:0039665">
    <property type="term" value="P:permeabilization of host organelle membrane involved in viral entry into host cell"/>
    <property type="evidence" value="ECO:0007669"/>
    <property type="project" value="UniProtKB-UniRule"/>
</dbReference>
<dbReference type="GO" id="GO:0019062">
    <property type="term" value="P:virion attachment to host cell"/>
    <property type="evidence" value="ECO:0007669"/>
    <property type="project" value="UniProtKB-UniRule"/>
</dbReference>
<dbReference type="Gene3D" id="1.20.5.170">
    <property type="match status" value="1"/>
</dbReference>
<dbReference type="Gene3D" id="2.60.120.200">
    <property type="match status" value="1"/>
</dbReference>
<dbReference type="HAMAP" id="MF_04132">
    <property type="entry name" value="Rota_A_VP4"/>
    <property type="match status" value="1"/>
</dbReference>
<dbReference type="HAMAP" id="MF_04125">
    <property type="entry name" value="Rota_VP4"/>
    <property type="match status" value="1"/>
</dbReference>
<dbReference type="InterPro" id="IPR013320">
    <property type="entry name" value="ConA-like_dom_sf"/>
</dbReference>
<dbReference type="InterPro" id="IPR042546">
    <property type="entry name" value="Rota_A_VP4"/>
</dbReference>
<dbReference type="InterPro" id="IPR035330">
    <property type="entry name" value="Rota_VP4_MID"/>
</dbReference>
<dbReference type="InterPro" id="IPR038017">
    <property type="entry name" value="Rota_VP4_MID_sf"/>
</dbReference>
<dbReference type="InterPro" id="IPR000416">
    <property type="entry name" value="VP4_concanavalin-like"/>
</dbReference>
<dbReference type="InterPro" id="IPR035329">
    <property type="entry name" value="VP4_helical"/>
</dbReference>
<dbReference type="Pfam" id="PF17477">
    <property type="entry name" value="Rota_VP4_MID"/>
    <property type="match status" value="1"/>
</dbReference>
<dbReference type="Pfam" id="PF00426">
    <property type="entry name" value="VP4_haemagglut"/>
    <property type="match status" value="1"/>
</dbReference>
<dbReference type="Pfam" id="PF17478">
    <property type="entry name" value="VP4_helical"/>
    <property type="match status" value="1"/>
</dbReference>
<dbReference type="SUPFAM" id="SSF49899">
    <property type="entry name" value="Concanavalin A-like lectins/glucanases"/>
    <property type="match status" value="1"/>
</dbReference>
<dbReference type="SUPFAM" id="SSF111379">
    <property type="entry name" value="VP4 membrane interaction domain"/>
    <property type="match status" value="1"/>
</dbReference>
<protein>
    <recommendedName>
        <fullName evidence="1">Outer capsid protein VP4</fullName>
    </recommendedName>
    <alternativeName>
        <fullName evidence="1">Hemagglutinin</fullName>
    </alternativeName>
    <component>
        <recommendedName>
            <fullName evidence="1">Outer capsid protein VP8*</fullName>
        </recommendedName>
    </component>
    <component>
        <recommendedName>
            <fullName evidence="1">Outer capsid protein VP5*</fullName>
        </recommendedName>
    </component>
</protein>
<evidence type="ECO:0000255" key="1">
    <source>
        <dbReference type="HAMAP-Rule" id="MF_04132"/>
    </source>
</evidence>
<evidence type="ECO:0000269" key="2">
    <source>
    </source>
</evidence>
<evidence type="ECO:0000303" key="3">
    <source>
    </source>
</evidence>
<organismHost>
    <name type="scientific">Oryctolagus cuniculus</name>
    <name type="common">Rabbit</name>
    <dbReference type="NCBI Taxonomy" id="9986"/>
</organismHost>
<proteinExistence type="evidence at transcript level"/>